<gene>
    <name type="ordered locus">YFL031C-A</name>
    <name type="ORF">YFL030C-A</name>
</gene>
<evidence type="ECO:0000305" key="1"/>
<evidence type="ECO:0000305" key="2">
    <source>
    </source>
</evidence>
<protein>
    <recommendedName>
        <fullName>Putative uncharacterized protein YFL031C-A</fullName>
    </recommendedName>
</protein>
<name>YF030_YEAST</name>
<comment type="miscellaneous">
    <text evidence="1">Partially overlaps HAC1.</text>
</comment>
<comment type="caution">
    <text evidence="2">Product of a dubious gene prediction unlikely to encode a functional protein. Because of that it is not part of the S.cerevisiae S288c complete/reference proteome set.</text>
</comment>
<proteinExistence type="uncertain"/>
<sequence length="33" mass="3764">MNSNLTALRTVQASRPFLSNKKRMALFVQEKLA</sequence>
<reference key="1">
    <citation type="journal article" date="1995" name="Nat. Genet.">
        <title>Analysis of the nucleotide sequence of chromosome VI from Saccharomyces cerevisiae.</title>
        <authorList>
            <person name="Murakami Y."/>
            <person name="Naitou M."/>
            <person name="Hagiwara H."/>
            <person name="Shibata T."/>
            <person name="Ozawa M."/>
            <person name="Sasanuma S."/>
            <person name="Sasanuma M."/>
            <person name="Tsuchiya Y."/>
            <person name="Soeda E."/>
            <person name="Yokoyama K."/>
            <person name="Yamazaki M."/>
            <person name="Tashiro H."/>
            <person name="Eki T."/>
        </authorList>
    </citation>
    <scope>NUCLEOTIDE SEQUENCE [LARGE SCALE GENOMIC DNA]</scope>
    <source>
        <strain>ATCC 204508 / S288c</strain>
    </source>
</reference>
<reference key="2">
    <citation type="journal article" date="2014" name="G3 (Bethesda)">
        <title>The reference genome sequence of Saccharomyces cerevisiae: Then and now.</title>
        <authorList>
            <person name="Engel S.R."/>
            <person name="Dietrich F.S."/>
            <person name="Fisk D.G."/>
            <person name="Binkley G."/>
            <person name="Balakrishnan R."/>
            <person name="Costanzo M.C."/>
            <person name="Dwight S.S."/>
            <person name="Hitz B.C."/>
            <person name="Karra K."/>
            <person name="Nash R.S."/>
            <person name="Weng S."/>
            <person name="Wong E.D."/>
            <person name="Lloyd P."/>
            <person name="Skrzypek M.S."/>
            <person name="Miyasato S.R."/>
            <person name="Simison M."/>
            <person name="Cherry J.M."/>
        </authorList>
    </citation>
    <scope>GENOME REANNOTATION</scope>
    <source>
        <strain>ATCC 204508 / S288c</strain>
    </source>
</reference>
<reference key="3">
    <citation type="journal article" date="2002" name="Nat. Biotechnol.">
        <title>An integrated approach for finding overlooked genes in yeast.</title>
        <authorList>
            <person name="Kumar A."/>
            <person name="Harrison P.M."/>
            <person name="Cheung K.-H."/>
            <person name="Lan N."/>
            <person name="Echols N."/>
            <person name="Bertone P."/>
            <person name="Miller P."/>
            <person name="Gerstein M.B."/>
            <person name="Snyder M."/>
        </authorList>
    </citation>
    <scope>NUCLEOTIDE SEQUENCE [GENOMIC DNA]</scope>
</reference>
<organism>
    <name type="scientific">Saccharomyces cerevisiae (strain ATCC 204508 / S288c)</name>
    <name type="common">Baker's yeast</name>
    <dbReference type="NCBI Taxonomy" id="559292"/>
    <lineage>
        <taxon>Eukaryota</taxon>
        <taxon>Fungi</taxon>
        <taxon>Dikarya</taxon>
        <taxon>Ascomycota</taxon>
        <taxon>Saccharomycotina</taxon>
        <taxon>Saccharomycetes</taxon>
        <taxon>Saccharomycetales</taxon>
        <taxon>Saccharomycetaceae</taxon>
        <taxon>Saccharomyces</taxon>
    </lineage>
</organism>
<dbReference type="EMBL" id="D50617">
    <property type="status" value="NOT_ANNOTATED_CDS"/>
    <property type="molecule type" value="Genomic_DNA"/>
</dbReference>
<dbReference type="EMBL" id="AF479892">
    <property type="protein sequence ID" value="AAL79205.1"/>
    <property type="molecule type" value="Genomic_DNA"/>
</dbReference>
<dbReference type="STRING" id="4932.YFL031C-A"/>
<dbReference type="PaxDb" id="4932-YFL031C-A"/>
<dbReference type="EnsemblFungi" id="YFL031C-A_mRNA">
    <property type="protein sequence ID" value="YFL031C-A"/>
    <property type="gene ID" value="YFL031C-A"/>
</dbReference>
<dbReference type="AGR" id="SGD:S000028629"/>
<dbReference type="SGD" id="S000028629">
    <property type="gene designation" value="YFL031C-A"/>
</dbReference>
<dbReference type="HOGENOM" id="CLU_3385082_0_0_1"/>
<accession>Q8TGU3</accession>
<feature type="chain" id="PRO_0000299659" description="Putative uncharacterized protein YFL031C-A">
    <location>
        <begin position="1"/>
        <end position="33"/>
    </location>
</feature>